<feature type="peptide" id="PRO_0000250414" description="Tryptophyllin-T2-6" evidence="2">
    <location>
        <begin position="1"/>
        <end position="6"/>
    </location>
</feature>
<feature type="modified residue" description="4-hydroxyproline" evidence="2">
    <location>
        <position position="3"/>
    </location>
</feature>
<feature type="modified residue" description="Leucine amide" evidence="2">
    <location>
        <position position="6"/>
    </location>
</feature>
<dbReference type="GO" id="GO:0005576">
    <property type="term" value="C:extracellular region"/>
    <property type="evidence" value="ECO:0007669"/>
    <property type="project" value="UniProtKB-SubCell"/>
</dbReference>
<dbReference type="GO" id="GO:0006952">
    <property type="term" value="P:defense response"/>
    <property type="evidence" value="ECO:0007669"/>
    <property type="project" value="UniProtKB-KW"/>
</dbReference>
<evidence type="ECO:0000255" key="1"/>
<evidence type="ECO:0000269" key="2">
    <source>
    </source>
</evidence>
<evidence type="ECO:0000303" key="3">
    <source>
    </source>
</evidence>
<evidence type="ECO:0000305" key="4"/>
<organism>
    <name type="scientific">Pithecopus azureus</name>
    <name type="common">Orange-legged monkey tree frog</name>
    <name type="synonym">Phyllomedusa azurea</name>
    <dbReference type="NCBI Taxonomy" id="2034991"/>
    <lineage>
        <taxon>Eukaryota</taxon>
        <taxon>Metazoa</taxon>
        <taxon>Chordata</taxon>
        <taxon>Craniata</taxon>
        <taxon>Vertebrata</taxon>
        <taxon>Euteleostomi</taxon>
        <taxon>Amphibia</taxon>
        <taxon>Batrachia</taxon>
        <taxon>Anura</taxon>
        <taxon>Neobatrachia</taxon>
        <taxon>Hyloidea</taxon>
        <taxon>Hylidae</taxon>
        <taxon>Phyllomedusinae</taxon>
        <taxon>Pithecopus</taxon>
    </lineage>
</organism>
<reference evidence="4" key="1">
    <citation type="journal article" date="2007" name="J. Proteome Res.">
        <title>Amphibian skin secretomics: application of parallel quadrupole time-of-flight mass spectrometry and peptide precursor cDNA cloning to rapidly characterize the skin secretory peptidome of Phyllomedusa hypochondrialis azurea: discovery of a novel peptide family, the hyposins.</title>
        <authorList>
            <person name="Thompson A.H."/>
            <person name="Bjourson A.J."/>
            <person name="Orr D.F."/>
            <person name="Shaw C."/>
            <person name="McClean S."/>
        </authorList>
    </citation>
    <scope>PROTEIN SEQUENCE</scope>
    <scope>SUBCELLULAR LOCATION</scope>
    <scope>TISSUE SPECIFICITY</scope>
    <scope>MASS SPECTROMETRY</scope>
    <scope>AMIDATION AT LEU-6</scope>
    <scope>HYDROXYLATION AT PRO-3</scope>
    <source>
        <tissue evidence="2">Skin secretion</tissue>
    </source>
</reference>
<accession>P84946</accession>
<name>TY26_PITAZ</name>
<comment type="subcellular location">
    <subcellularLocation>
        <location evidence="2">Secreted</location>
    </subcellularLocation>
</comment>
<comment type="tissue specificity">
    <text evidence="2">Expressed by the skin glands.</text>
</comment>
<comment type="mass spectrometry" mass="810.46" method="MALDI" evidence="2"/>
<comment type="similarity">
    <text evidence="1">Belongs to the frog skin active peptide (FSAP) family. Tryptophillin subfamily.</text>
</comment>
<sequence length="6" mass="796">KPPWRL</sequence>
<proteinExistence type="evidence at protein level"/>
<protein>
    <recommendedName>
        <fullName evidence="3">Tryptophyllin-T2-6</fullName>
        <shortName evidence="3">Pha-T2-6</shortName>
    </recommendedName>
    <alternativeName>
        <fullName evidence="3">Tryptophyllin-6</fullName>
    </alternativeName>
</protein>
<keyword id="KW-0027">Amidation</keyword>
<keyword id="KW-0878">Amphibian defense peptide</keyword>
<keyword id="KW-0903">Direct protein sequencing</keyword>
<keyword id="KW-0379">Hydroxylation</keyword>
<keyword id="KW-0964">Secreted</keyword>